<feature type="chain" id="PRO_0000134073" description="Enolase 1">
    <location>
        <begin position="1"/>
        <end position="446"/>
    </location>
</feature>
<feature type="active site" description="Proton donor" evidence="1">
    <location>
        <position position="216"/>
    </location>
</feature>
<feature type="active site" description="Proton acceptor" evidence="1">
    <location>
        <position position="354"/>
    </location>
</feature>
<feature type="binding site" evidence="1">
    <location>
        <position position="164"/>
    </location>
    <ligand>
        <name>substrate</name>
    </ligand>
</feature>
<feature type="binding site" evidence="1">
    <location>
        <position position="173"/>
    </location>
    <ligand>
        <name>substrate</name>
    </ligand>
</feature>
<feature type="binding site" evidence="1">
    <location>
        <position position="251"/>
    </location>
    <ligand>
        <name>Mg(2+)</name>
        <dbReference type="ChEBI" id="CHEBI:18420"/>
    </ligand>
</feature>
<feature type="binding site" evidence="1">
    <location>
        <position position="302"/>
    </location>
    <ligand>
        <name>Mg(2+)</name>
        <dbReference type="ChEBI" id="CHEBI:18420"/>
    </ligand>
</feature>
<feature type="binding site" evidence="1">
    <location>
        <position position="302"/>
    </location>
    <ligand>
        <name>substrate</name>
    </ligand>
</feature>
<feature type="binding site" evidence="1">
    <location>
        <position position="329"/>
    </location>
    <ligand>
        <name>Mg(2+)</name>
        <dbReference type="ChEBI" id="CHEBI:18420"/>
    </ligand>
</feature>
<feature type="binding site" evidence="1">
    <location>
        <position position="329"/>
    </location>
    <ligand>
        <name>substrate</name>
    </ligand>
</feature>
<feature type="binding site" evidence="1">
    <location>
        <begin position="381"/>
        <end position="384"/>
    </location>
    <ligand>
        <name>substrate</name>
    </ligand>
</feature>
<feature type="binding site" evidence="1">
    <location>
        <position position="405"/>
    </location>
    <ligand>
        <name>substrate</name>
    </ligand>
</feature>
<name>ENO1_MAIZE</name>
<organism>
    <name type="scientific">Zea mays</name>
    <name type="common">Maize</name>
    <dbReference type="NCBI Taxonomy" id="4577"/>
    <lineage>
        <taxon>Eukaryota</taxon>
        <taxon>Viridiplantae</taxon>
        <taxon>Streptophyta</taxon>
        <taxon>Embryophyta</taxon>
        <taxon>Tracheophyta</taxon>
        <taxon>Spermatophyta</taxon>
        <taxon>Magnoliopsida</taxon>
        <taxon>Liliopsida</taxon>
        <taxon>Poales</taxon>
        <taxon>Poaceae</taxon>
        <taxon>PACMAD clade</taxon>
        <taxon>Panicoideae</taxon>
        <taxon>Andropogonodae</taxon>
        <taxon>Andropogoneae</taxon>
        <taxon>Tripsacinae</taxon>
        <taxon>Zea</taxon>
    </lineage>
</organism>
<protein>
    <recommendedName>
        <fullName>Enolase 1</fullName>
        <ecNumber>4.2.1.11</ecNumber>
    </recommendedName>
    <alternativeName>
        <fullName>2-phospho-D-glycerate hydro-lyase 1</fullName>
    </alternativeName>
    <alternativeName>
        <fullName>2-phosphoglycerate dehydratase 1</fullName>
    </alternativeName>
</protein>
<evidence type="ECO:0000250" key="1"/>
<evidence type="ECO:0000305" key="2"/>
<gene>
    <name type="primary">ENO1</name>
    <name type="synonym">PGH1</name>
</gene>
<sequence>MAVTITWVKARQIFDSRGNPTVEVDVGLSDGSYARGAVPSGASTGIYEALELRDGGSDYLGKGVLKAVSNVNNIIGPAIVGKDPTEQVEIDNFMVQQLDGTSNEWGWCKQKLGANAILAVSLAVCKAGAMVKKIPLYQHIANLAGNKTLVLPVPAFNVINGGSHAGNKLAMQEFMILPTGASSFKEAMKMGVEVYHNLKSIIKKKYGQDATNVGDEGGFAPNIQENKEGLELLKAAIEKAGYTGKVVIGMDVAASEFFGEKDKTYDLNFKEENNDGSNKISGDSLKDLYKSFVSEYPIESIEDPFDQDDWSTYAKLTDEIGQKVQIVGDDLLVTNPTRVAKAINEKTCNALLLKVNQIGSVTESIEAVRMSKRAGWGVMASHRSGETEDTFIADLSVGLSTGQIKTGAPCRSERLAKYNQLLRIEEELGDAAVYAGAKFRAPVEPY</sequence>
<comment type="catalytic activity">
    <reaction>
        <text>(2R)-2-phosphoglycerate = phosphoenolpyruvate + H2O</text>
        <dbReference type="Rhea" id="RHEA:10164"/>
        <dbReference type="ChEBI" id="CHEBI:15377"/>
        <dbReference type="ChEBI" id="CHEBI:58289"/>
        <dbReference type="ChEBI" id="CHEBI:58702"/>
        <dbReference type="EC" id="4.2.1.11"/>
    </reaction>
</comment>
<comment type="cofactor">
    <cofactor evidence="1">
        <name>Mg(2+)</name>
        <dbReference type="ChEBI" id="CHEBI:18420"/>
    </cofactor>
    <text evidence="1">Mg(2+) is required for catalysis and for stabilizing the dimer.</text>
</comment>
<comment type="pathway">
    <text>Carbohydrate degradation; glycolysis; pyruvate from D-glyceraldehyde 3-phosphate: step 4/5.</text>
</comment>
<comment type="subunit">
    <text>Homodimer.</text>
</comment>
<comment type="subcellular location">
    <subcellularLocation>
        <location>Cytoplasm</location>
    </subcellularLocation>
</comment>
<comment type="similarity">
    <text evidence="2">Belongs to the enolase family.</text>
</comment>
<keyword id="KW-0963">Cytoplasm</keyword>
<keyword id="KW-0324">Glycolysis</keyword>
<keyword id="KW-0456">Lyase</keyword>
<keyword id="KW-0460">Magnesium</keyword>
<keyword id="KW-0479">Metal-binding</keyword>
<keyword id="KW-1185">Reference proteome</keyword>
<dbReference type="EC" id="4.2.1.11"/>
<dbReference type="EMBL" id="X55981">
    <property type="protein sequence ID" value="CAA39454.1"/>
    <property type="molecule type" value="mRNA"/>
</dbReference>
<dbReference type="PIR" id="S16257">
    <property type="entry name" value="S16257"/>
</dbReference>
<dbReference type="RefSeq" id="NP_001105896.1">
    <property type="nucleotide sequence ID" value="NM_001112426.1"/>
</dbReference>
<dbReference type="SMR" id="P26301"/>
<dbReference type="FunCoup" id="P26301">
    <property type="interactions" value="2491"/>
</dbReference>
<dbReference type="STRING" id="4577.P26301"/>
<dbReference type="PaxDb" id="4577-GRMZM2G064302_P01"/>
<dbReference type="ProMEX" id="P26301"/>
<dbReference type="GeneID" id="732811"/>
<dbReference type="KEGG" id="zma:732811"/>
<dbReference type="MaizeGDB" id="30060"/>
<dbReference type="eggNOG" id="KOG2670">
    <property type="taxonomic scope" value="Eukaryota"/>
</dbReference>
<dbReference type="InParanoid" id="P26301"/>
<dbReference type="OrthoDB" id="1739814at2759"/>
<dbReference type="UniPathway" id="UPA00109">
    <property type="reaction ID" value="UER00187"/>
</dbReference>
<dbReference type="Proteomes" id="UP000007305">
    <property type="component" value="Unplaced"/>
</dbReference>
<dbReference type="ExpressionAtlas" id="P26301">
    <property type="expression patterns" value="baseline and differential"/>
</dbReference>
<dbReference type="GO" id="GO:0000015">
    <property type="term" value="C:phosphopyruvate hydratase complex"/>
    <property type="evidence" value="ECO:0000318"/>
    <property type="project" value="GO_Central"/>
</dbReference>
<dbReference type="GO" id="GO:0000287">
    <property type="term" value="F:magnesium ion binding"/>
    <property type="evidence" value="ECO:0007669"/>
    <property type="project" value="InterPro"/>
</dbReference>
<dbReference type="GO" id="GO:0004634">
    <property type="term" value="F:phosphopyruvate hydratase activity"/>
    <property type="evidence" value="ECO:0000318"/>
    <property type="project" value="GO_Central"/>
</dbReference>
<dbReference type="GO" id="GO:0006096">
    <property type="term" value="P:glycolytic process"/>
    <property type="evidence" value="ECO:0000318"/>
    <property type="project" value="GO_Central"/>
</dbReference>
<dbReference type="CDD" id="cd03313">
    <property type="entry name" value="enolase"/>
    <property type="match status" value="1"/>
</dbReference>
<dbReference type="FunFam" id="3.30.390.10:FF:000001">
    <property type="entry name" value="Enolase"/>
    <property type="match status" value="1"/>
</dbReference>
<dbReference type="FunFam" id="3.20.20.120:FF:000002">
    <property type="entry name" value="Enolase 1"/>
    <property type="match status" value="1"/>
</dbReference>
<dbReference type="Gene3D" id="3.20.20.120">
    <property type="entry name" value="Enolase-like C-terminal domain"/>
    <property type="match status" value="1"/>
</dbReference>
<dbReference type="Gene3D" id="3.30.390.10">
    <property type="entry name" value="Enolase-like, N-terminal domain"/>
    <property type="match status" value="1"/>
</dbReference>
<dbReference type="HAMAP" id="MF_00318">
    <property type="entry name" value="Enolase"/>
    <property type="match status" value="1"/>
</dbReference>
<dbReference type="InterPro" id="IPR000941">
    <property type="entry name" value="Enolase"/>
</dbReference>
<dbReference type="InterPro" id="IPR036849">
    <property type="entry name" value="Enolase-like_C_sf"/>
</dbReference>
<dbReference type="InterPro" id="IPR029017">
    <property type="entry name" value="Enolase-like_N"/>
</dbReference>
<dbReference type="InterPro" id="IPR020810">
    <property type="entry name" value="Enolase_C"/>
</dbReference>
<dbReference type="InterPro" id="IPR020809">
    <property type="entry name" value="Enolase_CS"/>
</dbReference>
<dbReference type="InterPro" id="IPR020811">
    <property type="entry name" value="Enolase_N"/>
</dbReference>
<dbReference type="NCBIfam" id="TIGR01060">
    <property type="entry name" value="eno"/>
    <property type="match status" value="1"/>
</dbReference>
<dbReference type="PANTHER" id="PTHR11902">
    <property type="entry name" value="ENOLASE"/>
    <property type="match status" value="1"/>
</dbReference>
<dbReference type="PANTHER" id="PTHR11902:SF31">
    <property type="entry name" value="ENOLASE 1"/>
    <property type="match status" value="1"/>
</dbReference>
<dbReference type="Pfam" id="PF00113">
    <property type="entry name" value="Enolase_C"/>
    <property type="match status" value="1"/>
</dbReference>
<dbReference type="Pfam" id="PF03952">
    <property type="entry name" value="Enolase_N"/>
    <property type="match status" value="1"/>
</dbReference>
<dbReference type="PIRSF" id="PIRSF001400">
    <property type="entry name" value="Enolase"/>
    <property type="match status" value="1"/>
</dbReference>
<dbReference type="PRINTS" id="PR00148">
    <property type="entry name" value="ENOLASE"/>
</dbReference>
<dbReference type="SFLD" id="SFLDF00002">
    <property type="entry name" value="enolase"/>
    <property type="match status" value="1"/>
</dbReference>
<dbReference type="SFLD" id="SFLDG00178">
    <property type="entry name" value="enolase"/>
    <property type="match status" value="1"/>
</dbReference>
<dbReference type="SMART" id="SM01192">
    <property type="entry name" value="Enolase_C"/>
    <property type="match status" value="1"/>
</dbReference>
<dbReference type="SMART" id="SM01193">
    <property type="entry name" value="Enolase_N"/>
    <property type="match status" value="1"/>
</dbReference>
<dbReference type="SUPFAM" id="SSF51604">
    <property type="entry name" value="Enolase C-terminal domain-like"/>
    <property type="match status" value="1"/>
</dbReference>
<dbReference type="SUPFAM" id="SSF54826">
    <property type="entry name" value="Enolase N-terminal domain-like"/>
    <property type="match status" value="1"/>
</dbReference>
<dbReference type="PROSITE" id="PS00164">
    <property type="entry name" value="ENOLASE"/>
    <property type="match status" value="1"/>
</dbReference>
<proteinExistence type="evidence at transcript level"/>
<accession>P26301</accession>
<reference key="1">
    <citation type="journal article" date="1991" name="Plant Mol. Biol.">
        <title>Characterization of a maize cDNA that complements an enolase-deficient mutant of Escherichia coli.</title>
        <authorList>
            <person name="Lal S.K."/>
            <person name="Johnson S."/>
            <person name="Conway T."/>
            <person name="Kelley P.M."/>
        </authorList>
    </citation>
    <scope>NUCLEOTIDE SEQUENCE [MRNA]</scope>
    <source>
        <strain>cv. Berkeley Fast</strain>
        <tissue>Root</tissue>
    </source>
</reference>